<comment type="catalytic activity">
    <reaction evidence="1">
        <text>AMP + ATP = 2 ADP</text>
        <dbReference type="Rhea" id="RHEA:12973"/>
        <dbReference type="ChEBI" id="CHEBI:30616"/>
        <dbReference type="ChEBI" id="CHEBI:456215"/>
        <dbReference type="ChEBI" id="CHEBI:456216"/>
        <dbReference type="EC" id="2.7.4.3"/>
    </reaction>
</comment>
<comment type="subcellular location">
    <subcellularLocation>
        <location evidence="1">Cytoplasm</location>
    </subcellularLocation>
</comment>
<comment type="similarity">
    <text evidence="1">Belongs to the archaeal adenylate kinase family.</text>
</comment>
<accession>C3NH85</accession>
<dbReference type="EC" id="2.7.4.3" evidence="1"/>
<dbReference type="EMBL" id="CP001404">
    <property type="protein sequence ID" value="ACP48495.1"/>
    <property type="molecule type" value="Genomic_DNA"/>
</dbReference>
<dbReference type="RefSeq" id="WP_012711442.1">
    <property type="nucleotide sequence ID" value="NC_012623.1"/>
</dbReference>
<dbReference type="SMR" id="C3NH85"/>
<dbReference type="KEGG" id="sin:YN1551_1404"/>
<dbReference type="HOGENOM" id="CLU_119371_0_0_2"/>
<dbReference type="Proteomes" id="UP000006818">
    <property type="component" value="Chromosome"/>
</dbReference>
<dbReference type="GO" id="GO:0005737">
    <property type="term" value="C:cytoplasm"/>
    <property type="evidence" value="ECO:0007669"/>
    <property type="project" value="UniProtKB-SubCell"/>
</dbReference>
<dbReference type="GO" id="GO:0004017">
    <property type="term" value="F:adenylate kinase activity"/>
    <property type="evidence" value="ECO:0007669"/>
    <property type="project" value="UniProtKB-UniRule"/>
</dbReference>
<dbReference type="GO" id="GO:0005524">
    <property type="term" value="F:ATP binding"/>
    <property type="evidence" value="ECO:0007669"/>
    <property type="project" value="UniProtKB-UniRule"/>
</dbReference>
<dbReference type="Gene3D" id="3.40.50.300">
    <property type="entry name" value="P-loop containing nucleotide triphosphate hydrolases"/>
    <property type="match status" value="1"/>
</dbReference>
<dbReference type="HAMAP" id="MF_00234">
    <property type="entry name" value="Adenylate_kinase_AdkA"/>
    <property type="match status" value="1"/>
</dbReference>
<dbReference type="InterPro" id="IPR023477">
    <property type="entry name" value="Adenylate_kinase_AdkA"/>
</dbReference>
<dbReference type="InterPro" id="IPR027417">
    <property type="entry name" value="P-loop_NTPase"/>
</dbReference>
<dbReference type="NCBIfam" id="NF003122">
    <property type="entry name" value="PRK04040.1"/>
    <property type="match status" value="1"/>
</dbReference>
<dbReference type="Pfam" id="PF13207">
    <property type="entry name" value="AAA_17"/>
    <property type="match status" value="1"/>
</dbReference>
<dbReference type="SUPFAM" id="SSF52540">
    <property type="entry name" value="P-loop containing nucleoside triphosphate hydrolases"/>
    <property type="match status" value="1"/>
</dbReference>
<gene>
    <name evidence="1" type="primary">adkA</name>
    <name type="ordered locus">YN1551_1404</name>
</gene>
<sequence length="195" mass="21349">MKIGIVTGIPGVGKTTVLSFADKILTEKGIPHKIANYGDYMLNTALKEGYVNSRDEIRKLQIEKQRELQALAARRIVEDLSLLGDEGIGLIDTHAVIRTPAGYLPGLPRHVIEVLSPKVIFLLEADPRIILERQKRDNSRARADYSDTTVINEVIQFARYSAMASAVLVGASVKVVINQEGDPSIAASDIINSLM</sequence>
<evidence type="ECO:0000255" key="1">
    <source>
        <dbReference type="HAMAP-Rule" id="MF_00234"/>
    </source>
</evidence>
<reference key="1">
    <citation type="journal article" date="2009" name="Proc. Natl. Acad. Sci. U.S.A.">
        <title>Biogeography of the Sulfolobus islandicus pan-genome.</title>
        <authorList>
            <person name="Reno M.L."/>
            <person name="Held N.L."/>
            <person name="Fields C.J."/>
            <person name="Burke P.V."/>
            <person name="Whitaker R.J."/>
        </authorList>
    </citation>
    <scope>NUCLEOTIDE SEQUENCE [LARGE SCALE GENOMIC DNA]</scope>
    <source>
        <strain>Y.N.15.51 / Yellowstone #2</strain>
    </source>
</reference>
<keyword id="KW-0067">ATP-binding</keyword>
<keyword id="KW-0963">Cytoplasm</keyword>
<keyword id="KW-0418">Kinase</keyword>
<keyword id="KW-0547">Nucleotide-binding</keyword>
<keyword id="KW-0808">Transferase</keyword>
<proteinExistence type="inferred from homology"/>
<protein>
    <recommendedName>
        <fullName evidence="1">Adenylate kinase</fullName>
        <shortName evidence="1">AK</shortName>
        <ecNumber evidence="1">2.7.4.3</ecNumber>
    </recommendedName>
    <alternativeName>
        <fullName evidence="1">ATP-AMP transphosphorylase</fullName>
    </alternativeName>
</protein>
<organism>
    <name type="scientific">Saccharolobus islandicus (strain Y.N.15.51 / Yellowstone #2)</name>
    <name type="common">Sulfolobus islandicus</name>
    <dbReference type="NCBI Taxonomy" id="419942"/>
    <lineage>
        <taxon>Archaea</taxon>
        <taxon>Thermoproteota</taxon>
        <taxon>Thermoprotei</taxon>
        <taxon>Sulfolobales</taxon>
        <taxon>Sulfolobaceae</taxon>
        <taxon>Saccharolobus</taxon>
    </lineage>
</organism>
<name>KADA_SACI1</name>
<feature type="chain" id="PRO_1000204394" description="Adenylate kinase">
    <location>
        <begin position="1"/>
        <end position="195"/>
    </location>
</feature>
<feature type="binding site" evidence="1">
    <location>
        <begin position="8"/>
        <end position="16"/>
    </location>
    <ligand>
        <name>ATP</name>
        <dbReference type="ChEBI" id="CHEBI:30616"/>
    </ligand>
</feature>